<comment type="sequence caution" evidence="2">
    <conflict type="erroneous initiation">
        <sequence resource="EMBL-CDS" id="AAI18244"/>
    </conflict>
</comment>
<name>CLBA1_BOVIN</name>
<dbReference type="EMBL" id="BC118243">
    <property type="protein sequence ID" value="AAI18244.1"/>
    <property type="status" value="ALT_INIT"/>
    <property type="molecule type" value="mRNA"/>
</dbReference>
<dbReference type="RefSeq" id="NP_001069041.1">
    <property type="nucleotide sequence ID" value="NM_001075573.1"/>
</dbReference>
<dbReference type="RefSeq" id="XP_015314810.1">
    <property type="nucleotide sequence ID" value="XM_015459324.1"/>
</dbReference>
<dbReference type="FunCoup" id="Q17QP7">
    <property type="interactions" value="265"/>
</dbReference>
<dbReference type="STRING" id="9913.ENSBTAP00000013688"/>
<dbReference type="PaxDb" id="9913-ENSBTAP00000013688"/>
<dbReference type="GeneID" id="512628"/>
<dbReference type="KEGG" id="bta:512628"/>
<dbReference type="CTD" id="122616"/>
<dbReference type="eggNOG" id="ENOG502SPS5">
    <property type="taxonomic scope" value="Eukaryota"/>
</dbReference>
<dbReference type="HOGENOM" id="CLU_071310_0_1_1"/>
<dbReference type="InParanoid" id="Q17QP7"/>
<dbReference type="OrthoDB" id="9894316at2759"/>
<dbReference type="TreeFam" id="TF335916"/>
<dbReference type="Proteomes" id="UP000009136">
    <property type="component" value="Unplaced"/>
</dbReference>
<dbReference type="GO" id="GO:0030121">
    <property type="term" value="C:AP-1 adaptor complex"/>
    <property type="evidence" value="ECO:0000318"/>
    <property type="project" value="GO_Central"/>
</dbReference>
<dbReference type="GO" id="GO:0032588">
    <property type="term" value="C:trans-Golgi network membrane"/>
    <property type="evidence" value="ECO:0000318"/>
    <property type="project" value="GO_Central"/>
</dbReference>
<dbReference type="GO" id="GO:0030276">
    <property type="term" value="F:clathrin binding"/>
    <property type="evidence" value="ECO:0000318"/>
    <property type="project" value="GO_Central"/>
</dbReference>
<dbReference type="GO" id="GO:0046907">
    <property type="term" value="P:intracellular transport"/>
    <property type="evidence" value="ECO:0000318"/>
    <property type="project" value="GO_Central"/>
</dbReference>
<dbReference type="InterPro" id="IPR046359">
    <property type="entry name" value="Aftin-like"/>
</dbReference>
<dbReference type="InterPro" id="IPR029205">
    <property type="entry name" value="Clathrin-bd"/>
</dbReference>
<dbReference type="PANTHER" id="PTHR16156">
    <property type="entry name" value="AFTIPHILIN A-RELATED"/>
    <property type="match status" value="1"/>
</dbReference>
<dbReference type="PANTHER" id="PTHR16156:SF7">
    <property type="entry name" value="CLATHRIN BINDING BOX OF AFTIPHILIN CONTAINING 1"/>
    <property type="match status" value="1"/>
</dbReference>
<dbReference type="Pfam" id="PF15045">
    <property type="entry name" value="Clathrin_bdg"/>
    <property type="match status" value="1"/>
</dbReference>
<sequence length="336" mass="35944">MQDQRELGGAAGQGLPLCAFLSDLPEQGGGVSLRQVSKDSGAPGRQSGDAVEWARLRCALPPPDGEARTSGGSCEGLSTSTARGPDPGEHSGAWGEFEVFQESSASSEQFCQSFELQERPAASQPWRTASAQKQHGSSQPHQGGVTGTGAIAASELVVSCEDVFRSAFQEVPVPQATEGISTLDHFLEARNEESSGLESAQKLCSESRKLWRALHNTGTMTISRCTWSESRSRENFLPVLGVDAAQKSLSGSPGRTLGEPGLHEPEELGFHLQRCRALIQTKLSGTPTGGQGSLITYSLFLKTPIHGNGQYITTPRKKKTFGPRNLKLTLFNSDIY</sequence>
<accession>Q17QP7</accession>
<feature type="chain" id="PRO_0000274386" description="Uncharacterized protein CLBA1">
    <location>
        <begin position="1"/>
        <end position="336"/>
    </location>
</feature>
<feature type="region of interest" description="Disordered" evidence="1">
    <location>
        <begin position="29"/>
        <end position="93"/>
    </location>
</feature>
<feature type="region of interest" description="Disordered" evidence="1">
    <location>
        <begin position="116"/>
        <end position="147"/>
    </location>
</feature>
<feature type="compositionally biased region" description="Polar residues" evidence="1">
    <location>
        <begin position="70"/>
        <end position="82"/>
    </location>
</feature>
<feature type="compositionally biased region" description="Polar residues" evidence="1">
    <location>
        <begin position="125"/>
        <end position="141"/>
    </location>
</feature>
<organism>
    <name type="scientific">Bos taurus</name>
    <name type="common">Bovine</name>
    <dbReference type="NCBI Taxonomy" id="9913"/>
    <lineage>
        <taxon>Eukaryota</taxon>
        <taxon>Metazoa</taxon>
        <taxon>Chordata</taxon>
        <taxon>Craniata</taxon>
        <taxon>Vertebrata</taxon>
        <taxon>Euteleostomi</taxon>
        <taxon>Mammalia</taxon>
        <taxon>Eutheria</taxon>
        <taxon>Laurasiatheria</taxon>
        <taxon>Artiodactyla</taxon>
        <taxon>Ruminantia</taxon>
        <taxon>Pecora</taxon>
        <taxon>Bovidae</taxon>
        <taxon>Bovinae</taxon>
        <taxon>Bos</taxon>
    </lineage>
</organism>
<protein>
    <recommendedName>
        <fullName evidence="2">Uncharacterized protein CLBA1</fullName>
    </recommendedName>
    <alternativeName>
        <fullName>Clathrin-binding box of aftiphilin-containing protein 1</fullName>
    </alternativeName>
</protein>
<reference key="1">
    <citation type="submission" date="2006-06" db="EMBL/GenBank/DDBJ databases">
        <authorList>
            <consortium name="NIH - Mammalian Gene Collection (MGC) project"/>
        </authorList>
    </citation>
    <scope>NUCLEOTIDE SEQUENCE [LARGE SCALE MRNA]</scope>
    <source>
        <strain>Hereford</strain>
        <tissue>Brain cortex</tissue>
    </source>
</reference>
<evidence type="ECO:0000256" key="1">
    <source>
        <dbReference type="SAM" id="MobiDB-lite"/>
    </source>
</evidence>
<evidence type="ECO:0000305" key="2"/>
<gene>
    <name type="primary">CLBA1</name>
</gene>
<proteinExistence type="evidence at transcript level"/>
<keyword id="KW-1185">Reference proteome</keyword>